<accession>Q9CIE4</accession>
<name>DNLJ_LACLA</name>
<reference key="1">
    <citation type="journal article" date="2001" name="Genome Res.">
        <title>The complete genome sequence of the lactic acid bacterium Lactococcus lactis ssp. lactis IL1403.</title>
        <authorList>
            <person name="Bolotin A."/>
            <person name="Wincker P."/>
            <person name="Mauger S."/>
            <person name="Jaillon O."/>
            <person name="Malarme K."/>
            <person name="Weissenbach J."/>
            <person name="Ehrlich S.D."/>
            <person name="Sorokin A."/>
        </authorList>
    </citation>
    <scope>NUCLEOTIDE SEQUENCE [LARGE SCALE GENOMIC DNA]</scope>
    <source>
        <strain>IL1403</strain>
    </source>
</reference>
<comment type="function">
    <text evidence="1">DNA ligase that catalyzes the formation of phosphodiester linkages between 5'-phosphoryl and 3'-hydroxyl groups in double-stranded DNA using NAD as a coenzyme and as the energy source for the reaction. It is essential for DNA replication and repair of damaged DNA.</text>
</comment>
<comment type="catalytic activity">
    <reaction evidence="1">
        <text>NAD(+) + (deoxyribonucleotide)n-3'-hydroxyl + 5'-phospho-(deoxyribonucleotide)m = (deoxyribonucleotide)n+m + AMP + beta-nicotinamide D-nucleotide.</text>
        <dbReference type="EC" id="6.5.1.2"/>
    </reaction>
</comment>
<comment type="cofactor">
    <cofactor evidence="1">
        <name>Mg(2+)</name>
        <dbReference type="ChEBI" id="CHEBI:18420"/>
    </cofactor>
    <cofactor evidence="1">
        <name>Mn(2+)</name>
        <dbReference type="ChEBI" id="CHEBI:29035"/>
    </cofactor>
</comment>
<comment type="similarity">
    <text evidence="1">Belongs to the NAD-dependent DNA ligase family. LigA subfamily.</text>
</comment>
<evidence type="ECO:0000255" key="1">
    <source>
        <dbReference type="HAMAP-Rule" id="MF_01588"/>
    </source>
</evidence>
<sequence>MNIESKIKELTEKLNQYAYEYYTLDEPSVEDSEYDRLYQELVKLEAENPQLTRADSPTHRTGGVILDGFVKFRHPYNLYSLGDVFSREELAVWEERVRKEIANPEYICELKIDGLSLSLYYENGLLMTAATRGDGTTGENITENVKRIKDVPLKLKEAIDIVVRGEAYLPRKNFAKLNKERELEGATPFANPRNAAAGTLRQLDTKIVAKRGLATFLYQEASPATNDTQEEVLEYFEELGFQVNPERKFARNMDEIWEFIEEATRLRDELPYDIDGVVVKVNNLAEQEELGFTVKAPRWAIAYKFPAEQAETEILSVDWTVGRTGVVTPTANMTPVLLAQTTVARATLHNVDYIEEKDIRIGDHVLIYKAGDIIPKVGKVLLDKRPEGLEGLEIPTKCPECGSELIHFEDEVALRCVNPLCPAQIREKLIHFASRDAMNIVGLGPSVISQLFDKKLVADVADLYQLTIEDLLTLDKVKETLAQKIVSAIAQSRENSAEKLLFGLGIRHVGGKAAKLLLERFANLRALSKATEEEISEIPSLGGVIATAVVSYFETDGAKILLDELENAGVNFDYLGAVNIEGILSGKTVVLTGKLTTLKRSEAKEKLEALGANVSGSVSKKTDLVVAGEEAGSKLTKAQDLGIEIWSEQDLLDL</sequence>
<feature type="chain" id="PRO_0000313283" description="DNA ligase">
    <location>
        <begin position="1"/>
        <end position="654"/>
    </location>
</feature>
<feature type="domain" description="BRCT" evidence="1">
    <location>
        <begin position="579"/>
        <end position="654"/>
    </location>
</feature>
<feature type="active site" description="N6-AMP-lysine intermediate" evidence="1">
    <location>
        <position position="111"/>
    </location>
</feature>
<feature type="binding site" evidence="1">
    <location>
        <begin position="31"/>
        <end position="35"/>
    </location>
    <ligand>
        <name>NAD(+)</name>
        <dbReference type="ChEBI" id="CHEBI:57540"/>
    </ligand>
</feature>
<feature type="binding site" evidence="1">
    <location>
        <begin position="80"/>
        <end position="81"/>
    </location>
    <ligand>
        <name>NAD(+)</name>
        <dbReference type="ChEBI" id="CHEBI:57540"/>
    </ligand>
</feature>
<feature type="binding site" evidence="1">
    <location>
        <position position="109"/>
    </location>
    <ligand>
        <name>NAD(+)</name>
        <dbReference type="ChEBI" id="CHEBI:57540"/>
    </ligand>
</feature>
<feature type="binding site" evidence="1">
    <location>
        <position position="132"/>
    </location>
    <ligand>
        <name>NAD(+)</name>
        <dbReference type="ChEBI" id="CHEBI:57540"/>
    </ligand>
</feature>
<feature type="binding site" evidence="1">
    <location>
        <position position="166"/>
    </location>
    <ligand>
        <name>NAD(+)</name>
        <dbReference type="ChEBI" id="CHEBI:57540"/>
    </ligand>
</feature>
<feature type="binding site" evidence="1">
    <location>
        <position position="280"/>
    </location>
    <ligand>
        <name>NAD(+)</name>
        <dbReference type="ChEBI" id="CHEBI:57540"/>
    </ligand>
</feature>
<feature type="binding site" evidence="1">
    <location>
        <position position="304"/>
    </location>
    <ligand>
        <name>NAD(+)</name>
        <dbReference type="ChEBI" id="CHEBI:57540"/>
    </ligand>
</feature>
<feature type="binding site" evidence="1">
    <location>
        <position position="398"/>
    </location>
    <ligand>
        <name>Zn(2+)</name>
        <dbReference type="ChEBI" id="CHEBI:29105"/>
    </ligand>
</feature>
<feature type="binding site" evidence="1">
    <location>
        <position position="401"/>
    </location>
    <ligand>
        <name>Zn(2+)</name>
        <dbReference type="ChEBI" id="CHEBI:29105"/>
    </ligand>
</feature>
<feature type="binding site" evidence="1">
    <location>
        <position position="416"/>
    </location>
    <ligand>
        <name>Zn(2+)</name>
        <dbReference type="ChEBI" id="CHEBI:29105"/>
    </ligand>
</feature>
<feature type="binding site" evidence="1">
    <location>
        <position position="421"/>
    </location>
    <ligand>
        <name>Zn(2+)</name>
        <dbReference type="ChEBI" id="CHEBI:29105"/>
    </ligand>
</feature>
<organism>
    <name type="scientific">Lactococcus lactis subsp. lactis (strain IL1403)</name>
    <name type="common">Streptococcus lactis</name>
    <dbReference type="NCBI Taxonomy" id="272623"/>
    <lineage>
        <taxon>Bacteria</taxon>
        <taxon>Bacillati</taxon>
        <taxon>Bacillota</taxon>
        <taxon>Bacilli</taxon>
        <taxon>Lactobacillales</taxon>
        <taxon>Streptococcaceae</taxon>
        <taxon>Lactococcus</taxon>
    </lineage>
</organism>
<dbReference type="EC" id="6.5.1.2" evidence="1"/>
<dbReference type="EMBL" id="AE005176">
    <property type="protein sequence ID" value="AAK04517.1"/>
    <property type="molecule type" value="Genomic_DNA"/>
</dbReference>
<dbReference type="PIR" id="C86677">
    <property type="entry name" value="C86677"/>
</dbReference>
<dbReference type="RefSeq" id="NP_266575.1">
    <property type="nucleotide sequence ID" value="NC_002662.1"/>
</dbReference>
<dbReference type="RefSeq" id="WP_003131547.1">
    <property type="nucleotide sequence ID" value="NC_002662.1"/>
</dbReference>
<dbReference type="SMR" id="Q9CIE4"/>
<dbReference type="PaxDb" id="272623-L0304"/>
<dbReference type="EnsemblBacteria" id="AAK04517">
    <property type="protein sequence ID" value="AAK04517"/>
    <property type="gene ID" value="L0304"/>
</dbReference>
<dbReference type="KEGG" id="lla:L0304"/>
<dbReference type="PATRIC" id="fig|272623.7.peg.455"/>
<dbReference type="eggNOG" id="COG0272">
    <property type="taxonomic scope" value="Bacteria"/>
</dbReference>
<dbReference type="HOGENOM" id="CLU_007764_2_1_9"/>
<dbReference type="OrthoDB" id="9759736at2"/>
<dbReference type="Proteomes" id="UP000002196">
    <property type="component" value="Chromosome"/>
</dbReference>
<dbReference type="GO" id="GO:0005829">
    <property type="term" value="C:cytosol"/>
    <property type="evidence" value="ECO:0007669"/>
    <property type="project" value="TreeGrafter"/>
</dbReference>
<dbReference type="GO" id="GO:0003911">
    <property type="term" value="F:DNA ligase (NAD+) activity"/>
    <property type="evidence" value="ECO:0007669"/>
    <property type="project" value="UniProtKB-UniRule"/>
</dbReference>
<dbReference type="GO" id="GO:0046872">
    <property type="term" value="F:metal ion binding"/>
    <property type="evidence" value="ECO:0007669"/>
    <property type="project" value="UniProtKB-KW"/>
</dbReference>
<dbReference type="GO" id="GO:0006281">
    <property type="term" value="P:DNA repair"/>
    <property type="evidence" value="ECO:0007669"/>
    <property type="project" value="UniProtKB-KW"/>
</dbReference>
<dbReference type="GO" id="GO:0006260">
    <property type="term" value="P:DNA replication"/>
    <property type="evidence" value="ECO:0007669"/>
    <property type="project" value="UniProtKB-KW"/>
</dbReference>
<dbReference type="CDD" id="cd17748">
    <property type="entry name" value="BRCT_DNA_ligase_like"/>
    <property type="match status" value="1"/>
</dbReference>
<dbReference type="CDD" id="cd00114">
    <property type="entry name" value="LIGANc"/>
    <property type="match status" value="1"/>
</dbReference>
<dbReference type="FunFam" id="1.10.150.20:FF:000006">
    <property type="entry name" value="DNA ligase"/>
    <property type="match status" value="1"/>
</dbReference>
<dbReference type="FunFam" id="1.10.150.20:FF:000007">
    <property type="entry name" value="DNA ligase"/>
    <property type="match status" value="1"/>
</dbReference>
<dbReference type="FunFam" id="2.40.50.140:FF:000012">
    <property type="entry name" value="DNA ligase"/>
    <property type="match status" value="1"/>
</dbReference>
<dbReference type="FunFam" id="3.30.470.30:FF:000001">
    <property type="entry name" value="DNA ligase"/>
    <property type="match status" value="1"/>
</dbReference>
<dbReference type="Gene3D" id="6.20.10.30">
    <property type="match status" value="1"/>
</dbReference>
<dbReference type="Gene3D" id="1.10.150.20">
    <property type="entry name" value="5' to 3' exonuclease, C-terminal subdomain"/>
    <property type="match status" value="2"/>
</dbReference>
<dbReference type="Gene3D" id="3.40.50.10190">
    <property type="entry name" value="BRCT domain"/>
    <property type="match status" value="1"/>
</dbReference>
<dbReference type="Gene3D" id="3.30.470.30">
    <property type="entry name" value="DNA ligase/mRNA capping enzyme"/>
    <property type="match status" value="1"/>
</dbReference>
<dbReference type="Gene3D" id="1.10.287.610">
    <property type="entry name" value="Helix hairpin bin"/>
    <property type="match status" value="1"/>
</dbReference>
<dbReference type="Gene3D" id="2.40.50.140">
    <property type="entry name" value="Nucleic acid-binding proteins"/>
    <property type="match status" value="1"/>
</dbReference>
<dbReference type="HAMAP" id="MF_01588">
    <property type="entry name" value="DNA_ligase_A"/>
    <property type="match status" value="1"/>
</dbReference>
<dbReference type="InterPro" id="IPR001357">
    <property type="entry name" value="BRCT_dom"/>
</dbReference>
<dbReference type="InterPro" id="IPR036420">
    <property type="entry name" value="BRCT_dom_sf"/>
</dbReference>
<dbReference type="InterPro" id="IPR041663">
    <property type="entry name" value="DisA/LigA_HHH"/>
</dbReference>
<dbReference type="InterPro" id="IPR001679">
    <property type="entry name" value="DNA_ligase"/>
</dbReference>
<dbReference type="InterPro" id="IPR018239">
    <property type="entry name" value="DNA_ligase_AS"/>
</dbReference>
<dbReference type="InterPro" id="IPR033136">
    <property type="entry name" value="DNA_ligase_CS"/>
</dbReference>
<dbReference type="InterPro" id="IPR013839">
    <property type="entry name" value="DNAligase_adenylation"/>
</dbReference>
<dbReference type="InterPro" id="IPR013840">
    <property type="entry name" value="DNAligase_N"/>
</dbReference>
<dbReference type="InterPro" id="IPR012340">
    <property type="entry name" value="NA-bd_OB-fold"/>
</dbReference>
<dbReference type="InterPro" id="IPR004150">
    <property type="entry name" value="NAD_DNA_ligase_OB"/>
</dbReference>
<dbReference type="InterPro" id="IPR010994">
    <property type="entry name" value="RuvA_2-like"/>
</dbReference>
<dbReference type="InterPro" id="IPR004149">
    <property type="entry name" value="Znf_DNAligase_C4"/>
</dbReference>
<dbReference type="NCBIfam" id="TIGR00575">
    <property type="entry name" value="dnlj"/>
    <property type="match status" value="1"/>
</dbReference>
<dbReference type="NCBIfam" id="NF005932">
    <property type="entry name" value="PRK07956.1"/>
    <property type="match status" value="1"/>
</dbReference>
<dbReference type="PANTHER" id="PTHR23389">
    <property type="entry name" value="CHROMOSOME TRANSMISSION FIDELITY FACTOR 18"/>
    <property type="match status" value="1"/>
</dbReference>
<dbReference type="PANTHER" id="PTHR23389:SF9">
    <property type="entry name" value="DNA LIGASE"/>
    <property type="match status" value="1"/>
</dbReference>
<dbReference type="Pfam" id="PF00533">
    <property type="entry name" value="BRCT"/>
    <property type="match status" value="1"/>
</dbReference>
<dbReference type="Pfam" id="PF01653">
    <property type="entry name" value="DNA_ligase_aden"/>
    <property type="match status" value="1"/>
</dbReference>
<dbReference type="Pfam" id="PF03120">
    <property type="entry name" value="DNA_ligase_OB"/>
    <property type="match status" value="1"/>
</dbReference>
<dbReference type="Pfam" id="PF03119">
    <property type="entry name" value="DNA_ligase_ZBD"/>
    <property type="match status" value="1"/>
</dbReference>
<dbReference type="Pfam" id="PF12826">
    <property type="entry name" value="HHH_2"/>
    <property type="match status" value="1"/>
</dbReference>
<dbReference type="Pfam" id="PF22745">
    <property type="entry name" value="Nlig-Ia"/>
    <property type="match status" value="1"/>
</dbReference>
<dbReference type="PIRSF" id="PIRSF001604">
    <property type="entry name" value="LigA"/>
    <property type="match status" value="1"/>
</dbReference>
<dbReference type="SMART" id="SM00292">
    <property type="entry name" value="BRCT"/>
    <property type="match status" value="1"/>
</dbReference>
<dbReference type="SMART" id="SM00532">
    <property type="entry name" value="LIGANc"/>
    <property type="match status" value="1"/>
</dbReference>
<dbReference type="SUPFAM" id="SSF52113">
    <property type="entry name" value="BRCT domain"/>
    <property type="match status" value="1"/>
</dbReference>
<dbReference type="SUPFAM" id="SSF56091">
    <property type="entry name" value="DNA ligase/mRNA capping enzyme, catalytic domain"/>
    <property type="match status" value="1"/>
</dbReference>
<dbReference type="SUPFAM" id="SSF50249">
    <property type="entry name" value="Nucleic acid-binding proteins"/>
    <property type="match status" value="1"/>
</dbReference>
<dbReference type="SUPFAM" id="SSF47781">
    <property type="entry name" value="RuvA domain 2-like"/>
    <property type="match status" value="1"/>
</dbReference>
<dbReference type="PROSITE" id="PS50172">
    <property type="entry name" value="BRCT"/>
    <property type="match status" value="1"/>
</dbReference>
<dbReference type="PROSITE" id="PS01055">
    <property type="entry name" value="DNA_LIGASE_N1"/>
    <property type="match status" value="1"/>
</dbReference>
<dbReference type="PROSITE" id="PS01056">
    <property type="entry name" value="DNA_LIGASE_N2"/>
    <property type="match status" value="1"/>
</dbReference>
<keyword id="KW-0227">DNA damage</keyword>
<keyword id="KW-0234">DNA repair</keyword>
<keyword id="KW-0235">DNA replication</keyword>
<keyword id="KW-0436">Ligase</keyword>
<keyword id="KW-0460">Magnesium</keyword>
<keyword id="KW-0464">Manganese</keyword>
<keyword id="KW-0479">Metal-binding</keyword>
<keyword id="KW-0520">NAD</keyword>
<keyword id="KW-1185">Reference proteome</keyword>
<keyword id="KW-0862">Zinc</keyword>
<gene>
    <name evidence="1" type="primary">ligA</name>
    <name type="ordered locus">LL0419</name>
    <name type="ORF">L0304</name>
</gene>
<proteinExistence type="inferred from homology"/>
<protein>
    <recommendedName>
        <fullName evidence="1">DNA ligase</fullName>
        <ecNumber evidence="1">6.5.1.2</ecNumber>
    </recommendedName>
    <alternativeName>
        <fullName evidence="1">Polydeoxyribonucleotide synthase [NAD(+)]</fullName>
    </alternativeName>
</protein>